<accession>P70059</accession>
<organism>
    <name type="scientific">Xenopus laevis</name>
    <name type="common">African clawed frog</name>
    <dbReference type="NCBI Taxonomy" id="8355"/>
    <lineage>
        <taxon>Eukaryota</taxon>
        <taxon>Metazoa</taxon>
        <taxon>Chordata</taxon>
        <taxon>Craniata</taxon>
        <taxon>Vertebrata</taxon>
        <taxon>Euteleostomi</taxon>
        <taxon>Amphibia</taxon>
        <taxon>Batrachia</taxon>
        <taxon>Anura</taxon>
        <taxon>Pipoidea</taxon>
        <taxon>Pipidae</taxon>
        <taxon>Xenopodinae</taxon>
        <taxon>Xenopus</taxon>
        <taxon>Xenopus</taxon>
    </lineage>
</organism>
<feature type="signal peptide" evidence="1">
    <location>
        <begin position="1"/>
        <end position="15"/>
    </location>
</feature>
<feature type="propeptide" id="PRO_0000028235" description="Activation peptide" evidence="1">
    <location>
        <begin position="16"/>
        <end position="21"/>
    </location>
</feature>
<feature type="chain" id="PRO_0000028236" description="Trypsin">
    <location>
        <begin position="22"/>
        <end position="244"/>
    </location>
</feature>
<feature type="domain" description="Peptidase S1" evidence="2">
    <location>
        <begin position="22"/>
        <end position="242"/>
    </location>
</feature>
<feature type="active site" description="Charge relay system" evidence="1">
    <location>
        <position position="61"/>
    </location>
</feature>
<feature type="active site" description="Charge relay system" evidence="1">
    <location>
        <position position="105"/>
    </location>
</feature>
<feature type="active site" description="Charge relay system" evidence="1">
    <location>
        <position position="198"/>
    </location>
</feature>
<feature type="binding site" evidence="1">
    <location>
        <position position="73"/>
    </location>
    <ligand>
        <name>Ca(2+)</name>
        <dbReference type="ChEBI" id="CHEBI:29108"/>
    </ligand>
</feature>
<feature type="binding site" evidence="1">
    <location>
        <position position="75"/>
    </location>
    <ligand>
        <name>Ca(2+)</name>
        <dbReference type="ChEBI" id="CHEBI:29108"/>
    </ligand>
</feature>
<feature type="binding site" evidence="1">
    <location>
        <position position="83"/>
    </location>
    <ligand>
        <name>Ca(2+)</name>
        <dbReference type="ChEBI" id="CHEBI:29108"/>
    </ligand>
</feature>
<feature type="site" description="Required for specificity" evidence="1">
    <location>
        <position position="192"/>
    </location>
</feature>
<feature type="disulfide bond" evidence="2">
    <location>
        <begin position="28"/>
        <end position="158"/>
    </location>
</feature>
<feature type="disulfide bond" evidence="2">
    <location>
        <begin position="46"/>
        <end position="62"/>
    </location>
</feature>
<feature type="disulfide bond" evidence="2">
    <location>
        <begin position="130"/>
        <end position="231"/>
    </location>
</feature>
<feature type="disulfide bond" evidence="2">
    <location>
        <begin position="137"/>
        <end position="204"/>
    </location>
</feature>
<feature type="disulfide bond" evidence="2">
    <location>
        <begin position="169"/>
        <end position="183"/>
    </location>
</feature>
<feature type="disulfide bond" evidence="2">
    <location>
        <begin position="194"/>
        <end position="218"/>
    </location>
</feature>
<sequence length="244" mass="26080">MKFLVILVLLGAAVAFEDDDKIVGGFTCAKNAVPYQVSLNAGYHFCGGSLINSQWVVSAAHCYKSRIQVRLGEHNIALNEGTEQFIDSQKVIKHPNYNSRNLDNDIMLIKLSTTARLSANIQSVPLPSACASAGTNCLISGWGNTLSSGTNYPDLLQCLNAPILTDSQCSNSYPGEITKNMFCAGFLAGGKDSCQGDSGGPVVCNGQLQGVVSWGYGCAQRNYPGVYTKVCNFVTWIQSTISSN</sequence>
<comment type="catalytic activity">
    <reaction>
        <text>Preferential cleavage: Arg-|-Xaa, Lys-|-Xaa.</text>
        <dbReference type="EC" id="3.4.21.4"/>
    </reaction>
</comment>
<comment type="cofactor">
    <cofactor evidence="1">
        <name>Ca(2+)</name>
        <dbReference type="ChEBI" id="CHEBI:29108"/>
    </cofactor>
    <text evidence="1">Binds 1 Ca(2+) ion per subunit.</text>
</comment>
<comment type="subcellular location">
    <subcellularLocation>
        <location>Secreted</location>
        <location>Extracellular space</location>
    </subcellularLocation>
</comment>
<comment type="similarity">
    <text evidence="2">Belongs to the peptidase S1 family.</text>
</comment>
<proteinExistence type="evidence at transcript level"/>
<keyword id="KW-0106">Calcium</keyword>
<keyword id="KW-0222">Digestion</keyword>
<keyword id="KW-1015">Disulfide bond</keyword>
<keyword id="KW-0378">Hydrolase</keyword>
<keyword id="KW-0479">Metal-binding</keyword>
<keyword id="KW-0645">Protease</keyword>
<keyword id="KW-1185">Reference proteome</keyword>
<keyword id="KW-0964">Secreted</keyword>
<keyword id="KW-0720">Serine protease</keyword>
<keyword id="KW-0732">Signal</keyword>
<keyword id="KW-0865">Zymogen</keyword>
<evidence type="ECO:0000250" key="1"/>
<evidence type="ECO:0000255" key="2">
    <source>
        <dbReference type="PROSITE-ProRule" id="PRU00274"/>
    </source>
</evidence>
<protein>
    <recommendedName>
        <fullName>Trypsin</fullName>
        <ecNumber>3.4.21.4</ecNumber>
    </recommendedName>
</protein>
<name>TRY2_XENLA</name>
<dbReference type="EC" id="3.4.21.4"/>
<dbReference type="EMBL" id="U72330">
    <property type="protein sequence ID" value="AAB17274.1"/>
    <property type="molecule type" value="mRNA"/>
</dbReference>
<dbReference type="RefSeq" id="XP_018080424.1">
    <property type="nucleotide sequence ID" value="XM_018224935.2"/>
</dbReference>
<dbReference type="SMR" id="P70059"/>
<dbReference type="MEROPS" id="S01.126"/>
<dbReference type="DNASU" id="397853"/>
<dbReference type="GeneID" id="397853"/>
<dbReference type="KEGG" id="xla:397853"/>
<dbReference type="AGR" id="Xenbase:XB-GENE-5776767"/>
<dbReference type="CTD" id="397853"/>
<dbReference type="Xenbase" id="XB-GENE-5776767">
    <property type="gene designation" value="prss1.L"/>
</dbReference>
<dbReference type="OMA" id="TMGWGTD"/>
<dbReference type="OrthoDB" id="10059102at2759"/>
<dbReference type="Proteomes" id="UP000186698">
    <property type="component" value="Chromosome 7L"/>
</dbReference>
<dbReference type="Bgee" id="397853">
    <property type="expression patterns" value="Expressed in pancreas and 8 other cell types or tissues"/>
</dbReference>
<dbReference type="GO" id="GO:0005615">
    <property type="term" value="C:extracellular space"/>
    <property type="evidence" value="ECO:0000318"/>
    <property type="project" value="GO_Central"/>
</dbReference>
<dbReference type="GO" id="GO:0046872">
    <property type="term" value="F:metal ion binding"/>
    <property type="evidence" value="ECO:0007669"/>
    <property type="project" value="UniProtKB-KW"/>
</dbReference>
<dbReference type="GO" id="GO:0004252">
    <property type="term" value="F:serine-type endopeptidase activity"/>
    <property type="evidence" value="ECO:0000318"/>
    <property type="project" value="GO_Central"/>
</dbReference>
<dbReference type="GO" id="GO:0007586">
    <property type="term" value="P:digestion"/>
    <property type="evidence" value="ECO:0007669"/>
    <property type="project" value="UniProtKB-KW"/>
</dbReference>
<dbReference type="GO" id="GO:0006508">
    <property type="term" value="P:proteolysis"/>
    <property type="evidence" value="ECO:0007669"/>
    <property type="project" value="UniProtKB-KW"/>
</dbReference>
<dbReference type="CDD" id="cd00190">
    <property type="entry name" value="Tryp_SPc"/>
    <property type="match status" value="1"/>
</dbReference>
<dbReference type="FunFam" id="2.40.10.10:FF:000019">
    <property type="entry name" value="Anionic trypsin"/>
    <property type="match status" value="1"/>
</dbReference>
<dbReference type="FunFam" id="2.40.10.10:FF:000008">
    <property type="entry name" value="Cationic trypsin"/>
    <property type="match status" value="1"/>
</dbReference>
<dbReference type="Gene3D" id="2.40.10.10">
    <property type="entry name" value="Trypsin-like serine proteases"/>
    <property type="match status" value="2"/>
</dbReference>
<dbReference type="InterPro" id="IPR009003">
    <property type="entry name" value="Peptidase_S1_PA"/>
</dbReference>
<dbReference type="InterPro" id="IPR043504">
    <property type="entry name" value="Peptidase_S1_PA_chymotrypsin"/>
</dbReference>
<dbReference type="InterPro" id="IPR001314">
    <property type="entry name" value="Peptidase_S1A"/>
</dbReference>
<dbReference type="InterPro" id="IPR050127">
    <property type="entry name" value="Serine_Proteases_S1"/>
</dbReference>
<dbReference type="InterPro" id="IPR001254">
    <property type="entry name" value="Trypsin_dom"/>
</dbReference>
<dbReference type="InterPro" id="IPR018114">
    <property type="entry name" value="TRYPSIN_HIS"/>
</dbReference>
<dbReference type="InterPro" id="IPR033116">
    <property type="entry name" value="TRYPSIN_SER"/>
</dbReference>
<dbReference type="PANTHER" id="PTHR24264:SF15">
    <property type="entry name" value="RIKEN CDNA 2210010C04 GENE"/>
    <property type="match status" value="1"/>
</dbReference>
<dbReference type="PANTHER" id="PTHR24264">
    <property type="entry name" value="TRYPSIN-RELATED"/>
    <property type="match status" value="1"/>
</dbReference>
<dbReference type="Pfam" id="PF00089">
    <property type="entry name" value="Trypsin"/>
    <property type="match status" value="1"/>
</dbReference>
<dbReference type="PRINTS" id="PR00722">
    <property type="entry name" value="CHYMOTRYPSIN"/>
</dbReference>
<dbReference type="SMART" id="SM00020">
    <property type="entry name" value="Tryp_SPc"/>
    <property type="match status" value="1"/>
</dbReference>
<dbReference type="SUPFAM" id="SSF50494">
    <property type="entry name" value="Trypsin-like serine proteases"/>
    <property type="match status" value="1"/>
</dbReference>
<dbReference type="PROSITE" id="PS50240">
    <property type="entry name" value="TRYPSIN_DOM"/>
    <property type="match status" value="1"/>
</dbReference>
<dbReference type="PROSITE" id="PS00134">
    <property type="entry name" value="TRYPSIN_HIS"/>
    <property type="match status" value="1"/>
</dbReference>
<dbReference type="PROSITE" id="PS00135">
    <property type="entry name" value="TRYPSIN_SER"/>
    <property type="match status" value="1"/>
</dbReference>
<reference key="1">
    <citation type="submission" date="1996-09" db="EMBL/GenBank/DDBJ databases">
        <authorList>
            <person name="Wang K."/>
            <person name="Lytle L."/>
            <person name="Gan L."/>
            <person name="Hood L.E."/>
        </authorList>
    </citation>
    <scope>NUCLEOTIDE SEQUENCE [MRNA]</scope>
</reference>